<protein>
    <recommendedName>
        <fullName>Steroid 17-alpha-hydroxylase/17,20 lyase</fullName>
        <ecNumber evidence="2">1.14.14.19</ecNumber>
    </recommendedName>
    <alternativeName>
        <fullName>17-alpha-hydroxyprogesterone aldolase</fullName>
        <ecNumber evidence="2">1.14.14.32</ecNumber>
    </alternativeName>
    <alternativeName>
        <fullName>CYPXVII</fullName>
    </alternativeName>
    <alternativeName>
        <fullName>Cytochrome P450 17A1</fullName>
    </alternativeName>
    <alternativeName>
        <fullName>Cytochrome P450-C17</fullName>
        <shortName>Cytochrome P450c17</shortName>
    </alternativeName>
    <alternativeName>
        <fullName>Steroid 17-alpha-monooxygenase</fullName>
    </alternativeName>
</protein>
<organism>
    <name type="scientific">Pan troglodytes</name>
    <name type="common">Chimpanzee</name>
    <dbReference type="NCBI Taxonomy" id="9598"/>
    <lineage>
        <taxon>Eukaryota</taxon>
        <taxon>Metazoa</taxon>
        <taxon>Chordata</taxon>
        <taxon>Craniata</taxon>
        <taxon>Vertebrata</taxon>
        <taxon>Euteleostomi</taxon>
        <taxon>Mammalia</taxon>
        <taxon>Eutheria</taxon>
        <taxon>Euarchontoglires</taxon>
        <taxon>Primates</taxon>
        <taxon>Haplorrhini</taxon>
        <taxon>Catarrhini</taxon>
        <taxon>Hominidae</taxon>
        <taxon>Pan</taxon>
    </lineage>
</organism>
<evidence type="ECO:0000250" key="1"/>
<evidence type="ECO:0000250" key="2">
    <source>
        <dbReference type="UniProtKB" id="P05093"/>
    </source>
</evidence>
<evidence type="ECO:0000305" key="3"/>
<comment type="function">
    <text evidence="2">A cytochrome P450 monooxygenase involved in corticoid and androgen biosynthesis. Catalyzes 17-alpha hydroxylation of C21 steroids, which is common for both pathways. A second oxidative step, required only for androgen synthesis, involves an acyl-carbon cleavage. The 17-alpha hydroxy intermediates, as part of adrenal glucocorticoids biosynthesis pathway, are precursors of cortisol. Hydroxylates steroid hormones, pregnenolone and progesterone to form 17-alpha hydroxy metabolites, followed by the cleavage of the C17-C20 bond to form C19 steroids, dehydroepiandrosterone (DHEA) and androstenedione. Has 16-alpha hydroxylase activity. Catalyzes 16-alpha hydroxylation of 17-alpha hydroxy pregnenolone, followed by the cleavage of the C17-C20 bond to form 16-alpha-hydroxy DHEA. Also 16-alpha hydroxylates androgens, relevant for estriol synthesis. Mechanistically, uses molecular oxygen inserting one oxygen atom into a substrate, and reducing the second into a water molecule, with two electrons provided by NADPH via cytochrome P450 reductase (CPR; NADPH-ferrihemoprotein reductase).</text>
</comment>
<comment type="catalytic activity">
    <reaction evidence="2">
        <text>a C21-steroid + reduced [NADPH--hemoprotein reductase] + O2 = a 17alpha-hydroxy-C21-steroid + oxidized [NADPH--hemoprotein reductase] + H2O + H(+)</text>
        <dbReference type="Rhea" id="RHEA:65760"/>
        <dbReference type="Rhea" id="RHEA-COMP:11964"/>
        <dbReference type="Rhea" id="RHEA-COMP:11965"/>
        <dbReference type="ChEBI" id="CHEBI:15377"/>
        <dbReference type="ChEBI" id="CHEBI:15378"/>
        <dbReference type="ChEBI" id="CHEBI:15379"/>
        <dbReference type="ChEBI" id="CHEBI:57618"/>
        <dbReference type="ChEBI" id="CHEBI:58210"/>
        <dbReference type="ChEBI" id="CHEBI:61313"/>
        <dbReference type="ChEBI" id="CHEBI:138141"/>
        <dbReference type="EC" id="1.14.14.19"/>
    </reaction>
    <physiologicalReaction direction="left-to-right" evidence="2">
        <dbReference type="Rhea" id="RHEA:65761"/>
    </physiologicalReaction>
</comment>
<comment type="catalytic activity">
    <reaction evidence="2">
        <text>progesterone + reduced [NADPH--hemoprotein reductase] + O2 = 17alpha-hydroxyprogesterone + oxidized [NADPH--hemoprotein reductase] + H2O + H(+)</text>
        <dbReference type="Rhea" id="RHEA:46308"/>
        <dbReference type="Rhea" id="RHEA-COMP:11964"/>
        <dbReference type="Rhea" id="RHEA-COMP:11965"/>
        <dbReference type="ChEBI" id="CHEBI:15377"/>
        <dbReference type="ChEBI" id="CHEBI:15378"/>
        <dbReference type="ChEBI" id="CHEBI:15379"/>
        <dbReference type="ChEBI" id="CHEBI:17026"/>
        <dbReference type="ChEBI" id="CHEBI:17252"/>
        <dbReference type="ChEBI" id="CHEBI:57618"/>
        <dbReference type="ChEBI" id="CHEBI:58210"/>
        <dbReference type="EC" id="1.14.14.19"/>
    </reaction>
    <physiologicalReaction direction="left-to-right" evidence="2">
        <dbReference type="Rhea" id="RHEA:46309"/>
    </physiologicalReaction>
</comment>
<comment type="catalytic activity">
    <reaction evidence="2">
        <text>pregnenolone + reduced [NADPH--hemoprotein reductase] + O2 = 17alpha-hydroxypregnenolone + oxidized [NADPH--hemoprotein reductase] + H2O + H(+)</text>
        <dbReference type="Rhea" id="RHEA:50236"/>
        <dbReference type="Rhea" id="RHEA-COMP:11964"/>
        <dbReference type="Rhea" id="RHEA-COMP:11965"/>
        <dbReference type="ChEBI" id="CHEBI:15377"/>
        <dbReference type="ChEBI" id="CHEBI:15378"/>
        <dbReference type="ChEBI" id="CHEBI:15379"/>
        <dbReference type="ChEBI" id="CHEBI:16581"/>
        <dbReference type="ChEBI" id="CHEBI:28750"/>
        <dbReference type="ChEBI" id="CHEBI:57618"/>
        <dbReference type="ChEBI" id="CHEBI:58210"/>
        <dbReference type="EC" id="1.14.14.19"/>
    </reaction>
    <physiologicalReaction direction="left-to-right" evidence="2">
        <dbReference type="Rhea" id="RHEA:50237"/>
    </physiologicalReaction>
</comment>
<comment type="catalytic activity">
    <reaction evidence="2">
        <text>17alpha-hydroxyprogesterone + reduced [NADPH--hemoprotein reductase] + O2 = androst-4-ene-3,17-dione + acetate + oxidized [NADPH--hemoprotein reductase] + H2O + 2 H(+)</text>
        <dbReference type="Rhea" id="RHEA:14753"/>
        <dbReference type="Rhea" id="RHEA-COMP:11964"/>
        <dbReference type="Rhea" id="RHEA-COMP:11965"/>
        <dbReference type="ChEBI" id="CHEBI:15377"/>
        <dbReference type="ChEBI" id="CHEBI:15378"/>
        <dbReference type="ChEBI" id="CHEBI:15379"/>
        <dbReference type="ChEBI" id="CHEBI:16422"/>
        <dbReference type="ChEBI" id="CHEBI:17252"/>
        <dbReference type="ChEBI" id="CHEBI:30089"/>
        <dbReference type="ChEBI" id="CHEBI:57618"/>
        <dbReference type="ChEBI" id="CHEBI:58210"/>
        <dbReference type="EC" id="1.14.14.32"/>
    </reaction>
    <physiologicalReaction direction="left-to-right" evidence="2">
        <dbReference type="Rhea" id="RHEA:14754"/>
    </physiologicalReaction>
</comment>
<comment type="catalytic activity">
    <reaction evidence="2">
        <text>17alpha-hydroxyprogesterone + reduced [NADPH--hemoprotein reductase] + O2 = 16alpha,17alpha-dihydroxyprogesterone + oxidized [NADPH--hemoprotein reductase] + H2O + H(+)</text>
        <dbReference type="Rhea" id="RHEA:53216"/>
        <dbReference type="Rhea" id="RHEA-COMP:11964"/>
        <dbReference type="Rhea" id="RHEA-COMP:11965"/>
        <dbReference type="ChEBI" id="CHEBI:763"/>
        <dbReference type="ChEBI" id="CHEBI:15377"/>
        <dbReference type="ChEBI" id="CHEBI:15378"/>
        <dbReference type="ChEBI" id="CHEBI:15379"/>
        <dbReference type="ChEBI" id="CHEBI:17252"/>
        <dbReference type="ChEBI" id="CHEBI:57618"/>
        <dbReference type="ChEBI" id="CHEBI:58210"/>
    </reaction>
    <physiologicalReaction direction="left-to-right" evidence="2">
        <dbReference type="Rhea" id="RHEA:53217"/>
    </physiologicalReaction>
</comment>
<comment type="catalytic activity">
    <reaction evidence="2">
        <text>16alpha,17alpha-dihydroxyprogesterone + reduced [NADPH--hemoprotein reductase] + O2 = 6beta,16alpha,17alpha-trihydroxyprogesterone + oxidized [NADPH--hemoprotein reductase] + H2O + H(+)</text>
        <dbReference type="Rhea" id="RHEA:53220"/>
        <dbReference type="Rhea" id="RHEA-COMP:11964"/>
        <dbReference type="Rhea" id="RHEA-COMP:11965"/>
        <dbReference type="ChEBI" id="CHEBI:763"/>
        <dbReference type="ChEBI" id="CHEBI:15377"/>
        <dbReference type="ChEBI" id="CHEBI:15378"/>
        <dbReference type="ChEBI" id="CHEBI:15379"/>
        <dbReference type="ChEBI" id="CHEBI:57618"/>
        <dbReference type="ChEBI" id="CHEBI:58210"/>
        <dbReference type="ChEBI" id="CHEBI:137046"/>
    </reaction>
    <physiologicalReaction direction="left-to-right" evidence="2">
        <dbReference type="Rhea" id="RHEA:53221"/>
    </physiologicalReaction>
</comment>
<comment type="catalytic activity">
    <reaction evidence="2">
        <text>17alpha-hydroxypregnenolone + reduced [NADPH--hemoprotein reductase] + O2 = 3beta-hydroxyandrost-5-en-17-one + acetate + oxidized [NADPH--hemoprotein reductase] + H2O + 2 H(+)</text>
        <dbReference type="Rhea" id="RHEA:50244"/>
        <dbReference type="Rhea" id="RHEA-COMP:11964"/>
        <dbReference type="Rhea" id="RHEA-COMP:11965"/>
        <dbReference type="ChEBI" id="CHEBI:15377"/>
        <dbReference type="ChEBI" id="CHEBI:15378"/>
        <dbReference type="ChEBI" id="CHEBI:15379"/>
        <dbReference type="ChEBI" id="CHEBI:28689"/>
        <dbReference type="ChEBI" id="CHEBI:28750"/>
        <dbReference type="ChEBI" id="CHEBI:30089"/>
        <dbReference type="ChEBI" id="CHEBI:57618"/>
        <dbReference type="ChEBI" id="CHEBI:58210"/>
        <dbReference type="EC" id="1.14.14.32"/>
    </reaction>
    <physiologicalReaction direction="left-to-right" evidence="2">
        <dbReference type="Rhea" id="RHEA:50245"/>
    </physiologicalReaction>
</comment>
<comment type="catalytic activity">
    <reaction evidence="2">
        <text>16alpha,17alpha-dihydroxypregnenolone + reduced [NADPH--hemoprotein reductase] + O2 = 3beta,16alpha-dihydroxy-androst-5-en-17-one + acetate + oxidized [NADPH--hemoprotein reductase] + H2O + 2 H(+)</text>
        <dbReference type="Rhea" id="RHEA:53224"/>
        <dbReference type="Rhea" id="RHEA-COMP:11964"/>
        <dbReference type="Rhea" id="RHEA-COMP:11965"/>
        <dbReference type="ChEBI" id="CHEBI:15377"/>
        <dbReference type="ChEBI" id="CHEBI:15378"/>
        <dbReference type="ChEBI" id="CHEBI:15379"/>
        <dbReference type="ChEBI" id="CHEBI:27771"/>
        <dbReference type="ChEBI" id="CHEBI:30089"/>
        <dbReference type="ChEBI" id="CHEBI:57618"/>
        <dbReference type="ChEBI" id="CHEBI:58210"/>
        <dbReference type="ChEBI" id="CHEBI:137049"/>
    </reaction>
    <physiologicalReaction direction="left-to-right" evidence="2">
        <dbReference type="Rhea" id="RHEA:53225"/>
    </physiologicalReaction>
</comment>
<comment type="catalytic activity">
    <reaction evidence="2">
        <text>3beta-hydroxyandrost-5-en-17-one + reduced [NADPH--hemoprotein reductase] + O2 = 3beta,16alpha-dihydroxy-androst-5-en-17-one + oxidized [NADPH--hemoprotein reductase] + H2O + H(+)</text>
        <dbReference type="Rhea" id="RHEA:47220"/>
        <dbReference type="Rhea" id="RHEA-COMP:11964"/>
        <dbReference type="Rhea" id="RHEA-COMP:11965"/>
        <dbReference type="ChEBI" id="CHEBI:15377"/>
        <dbReference type="ChEBI" id="CHEBI:15378"/>
        <dbReference type="ChEBI" id="CHEBI:15379"/>
        <dbReference type="ChEBI" id="CHEBI:27771"/>
        <dbReference type="ChEBI" id="CHEBI:28689"/>
        <dbReference type="ChEBI" id="CHEBI:57618"/>
        <dbReference type="ChEBI" id="CHEBI:58210"/>
    </reaction>
    <physiologicalReaction direction="left-to-right" evidence="2">
        <dbReference type="Rhea" id="RHEA:47221"/>
    </physiologicalReaction>
</comment>
<comment type="catalytic activity">
    <reaction evidence="2">
        <text>androst-4-ene-3,17-dione + reduced [NADPH--hemoprotein reductase] + O2 = 16alpha-hydroxyandrost-4-ene-3,17-dione + oxidized [NADPH--hemoprotein reductase] + H2O + H(+)</text>
        <dbReference type="Rhea" id="RHEA:53228"/>
        <dbReference type="Rhea" id="RHEA-COMP:11964"/>
        <dbReference type="Rhea" id="RHEA-COMP:11965"/>
        <dbReference type="ChEBI" id="CHEBI:15377"/>
        <dbReference type="ChEBI" id="CHEBI:15378"/>
        <dbReference type="ChEBI" id="CHEBI:15379"/>
        <dbReference type="ChEBI" id="CHEBI:16422"/>
        <dbReference type="ChEBI" id="CHEBI:27582"/>
        <dbReference type="ChEBI" id="CHEBI:57618"/>
        <dbReference type="ChEBI" id="CHEBI:58210"/>
    </reaction>
    <physiologicalReaction direction="left-to-right" evidence="2">
        <dbReference type="Rhea" id="RHEA:53229"/>
    </physiologicalReaction>
</comment>
<comment type="cofactor">
    <cofactor evidence="2">
        <name>heme</name>
        <dbReference type="ChEBI" id="CHEBI:30413"/>
    </cofactor>
</comment>
<comment type="activity regulation">
    <text evidence="2">Regulated predominantly by intracellular cAMP levels. The 17,20-lyase activity is stimulated by cytochrome b5, which acts as an allosteric effector increasing the Vmax of the lyase activity.</text>
</comment>
<comment type="pathway">
    <text evidence="2">Steroid hormone biosynthesis.</text>
</comment>
<comment type="pathway">
    <text evidence="2">Steroid biosynthesis; glucocorticoid biosynthesis.</text>
</comment>
<comment type="subcellular location">
    <subcellularLocation>
        <location evidence="2">Endoplasmic reticulum membrane</location>
    </subcellularLocation>
    <subcellularLocation>
        <location evidence="2">Microsome membrane</location>
    </subcellularLocation>
</comment>
<comment type="similarity">
    <text evidence="3">Belongs to the cytochrome P450 family.</text>
</comment>
<name>CP17A_PANTR</name>
<dbReference type="EC" id="1.14.14.19" evidence="2"/>
<dbReference type="EC" id="1.14.14.32" evidence="2"/>
<dbReference type="EMBL" id="AF458330">
    <property type="protein sequence ID" value="AAN86251.1"/>
    <property type="molecule type" value="mRNA"/>
</dbReference>
<dbReference type="RefSeq" id="NP_001009052.1">
    <property type="nucleotide sequence ID" value="NM_001009052.1"/>
</dbReference>
<dbReference type="SMR" id="Q8HYN1"/>
<dbReference type="FunCoup" id="Q8HYN1">
    <property type="interactions" value="401"/>
</dbReference>
<dbReference type="STRING" id="9598.ENSPTRP00000069568"/>
<dbReference type="GeneID" id="450141"/>
<dbReference type="KEGG" id="ptr:450141"/>
<dbReference type="CTD" id="1586"/>
<dbReference type="InParanoid" id="Q8HYN1"/>
<dbReference type="UniPathway" id="UPA00788"/>
<dbReference type="Proteomes" id="UP000002277">
    <property type="component" value="Unplaced"/>
</dbReference>
<dbReference type="GO" id="GO:0005789">
    <property type="term" value="C:endoplasmic reticulum membrane"/>
    <property type="evidence" value="ECO:0007669"/>
    <property type="project" value="UniProtKB-SubCell"/>
</dbReference>
<dbReference type="GO" id="GO:0020037">
    <property type="term" value="F:heme binding"/>
    <property type="evidence" value="ECO:0000250"/>
    <property type="project" value="UniProtKB"/>
</dbReference>
<dbReference type="GO" id="GO:0005506">
    <property type="term" value="F:iron ion binding"/>
    <property type="evidence" value="ECO:0007669"/>
    <property type="project" value="InterPro"/>
</dbReference>
<dbReference type="GO" id="GO:0016829">
    <property type="term" value="F:lyase activity"/>
    <property type="evidence" value="ECO:0007669"/>
    <property type="project" value="UniProtKB-KW"/>
</dbReference>
<dbReference type="GO" id="GO:0004508">
    <property type="term" value="F:steroid 17-alpha-monooxygenase activity"/>
    <property type="evidence" value="ECO:0000250"/>
    <property type="project" value="UniProtKB"/>
</dbReference>
<dbReference type="GO" id="GO:0006704">
    <property type="term" value="P:glucocorticoid biosynthetic process"/>
    <property type="evidence" value="ECO:0007669"/>
    <property type="project" value="UniProtKB-UniPathway"/>
</dbReference>
<dbReference type="GO" id="GO:0042446">
    <property type="term" value="P:hormone biosynthetic process"/>
    <property type="evidence" value="ECO:0000250"/>
    <property type="project" value="UniProtKB"/>
</dbReference>
<dbReference type="GO" id="GO:0042448">
    <property type="term" value="P:progesterone metabolic process"/>
    <property type="evidence" value="ECO:0000250"/>
    <property type="project" value="UniProtKB"/>
</dbReference>
<dbReference type="GO" id="GO:0008202">
    <property type="term" value="P:steroid metabolic process"/>
    <property type="evidence" value="ECO:0000250"/>
    <property type="project" value="UniProtKB"/>
</dbReference>
<dbReference type="CDD" id="cd20673">
    <property type="entry name" value="CYP17A1"/>
    <property type="match status" value="1"/>
</dbReference>
<dbReference type="FunFam" id="1.10.630.10:FF:000002">
    <property type="entry name" value="Cytochrome P450 1A1"/>
    <property type="match status" value="1"/>
</dbReference>
<dbReference type="Gene3D" id="1.10.630.10">
    <property type="entry name" value="Cytochrome P450"/>
    <property type="match status" value="1"/>
</dbReference>
<dbReference type="InterPro" id="IPR001128">
    <property type="entry name" value="Cyt_P450"/>
</dbReference>
<dbReference type="InterPro" id="IPR017972">
    <property type="entry name" value="Cyt_P450_CS"/>
</dbReference>
<dbReference type="InterPro" id="IPR002401">
    <property type="entry name" value="Cyt_P450_E_grp-I"/>
</dbReference>
<dbReference type="InterPro" id="IPR036396">
    <property type="entry name" value="Cyt_P450_sf"/>
</dbReference>
<dbReference type="PANTHER" id="PTHR24289">
    <property type="entry name" value="STEROID 17-ALPHA-HYDROXYLASE/17,20 LYASE"/>
    <property type="match status" value="1"/>
</dbReference>
<dbReference type="PANTHER" id="PTHR24289:SF13">
    <property type="entry name" value="STEROID 17-ALPHA-HYDROXYLASE_17,20 LYASE"/>
    <property type="match status" value="1"/>
</dbReference>
<dbReference type="Pfam" id="PF00067">
    <property type="entry name" value="p450"/>
    <property type="match status" value="1"/>
</dbReference>
<dbReference type="PRINTS" id="PR00463">
    <property type="entry name" value="EP450I"/>
</dbReference>
<dbReference type="PRINTS" id="PR00385">
    <property type="entry name" value="P450"/>
</dbReference>
<dbReference type="SUPFAM" id="SSF48264">
    <property type="entry name" value="Cytochrome P450"/>
    <property type="match status" value="1"/>
</dbReference>
<dbReference type="PROSITE" id="PS00086">
    <property type="entry name" value="CYTOCHROME_P450"/>
    <property type="match status" value="1"/>
</dbReference>
<feature type="chain" id="PRO_0000051936" description="Steroid 17-alpha-hydroxylase/17,20 lyase">
    <location>
        <begin position="1"/>
        <end position="508"/>
    </location>
</feature>
<feature type="binding site" evidence="2">
    <location>
        <position position="202"/>
    </location>
    <ligand>
        <name>substrate</name>
    </ligand>
</feature>
<feature type="binding site" description="axial binding residue" evidence="1">
    <location>
        <position position="442"/>
    </location>
    <ligand>
        <name>heme</name>
        <dbReference type="ChEBI" id="CHEBI:30413"/>
    </ligand>
    <ligandPart>
        <name>Fe</name>
        <dbReference type="ChEBI" id="CHEBI:18248"/>
    </ligandPart>
</feature>
<reference key="1">
    <citation type="journal article" date="2002" name="Endocrinology">
        <title>Molecular evolution of adrenarche: structural and functional analysis of p450c17 from four primate species.</title>
        <authorList>
            <person name="Arlt W."/>
            <person name="Martens J.W."/>
            <person name="Song M."/>
            <person name="Wang J.T."/>
            <person name="Auchus R.J."/>
            <person name="Miller W.L."/>
        </authorList>
    </citation>
    <scope>NUCLEOTIDE SEQUENCE [MRNA]</scope>
</reference>
<accession>Q8HYN1</accession>
<keyword id="KW-0256">Endoplasmic reticulum</keyword>
<keyword id="KW-0349">Heme</keyword>
<keyword id="KW-0408">Iron</keyword>
<keyword id="KW-0443">Lipid metabolism</keyword>
<keyword id="KW-0456">Lyase</keyword>
<keyword id="KW-0472">Membrane</keyword>
<keyword id="KW-0479">Metal-binding</keyword>
<keyword id="KW-0492">Microsome</keyword>
<keyword id="KW-0503">Monooxygenase</keyword>
<keyword id="KW-0560">Oxidoreductase</keyword>
<keyword id="KW-1185">Reference proteome</keyword>
<keyword id="KW-0755">Steroidogenesis</keyword>
<sequence length="508" mass="57384">MWELVALLLLTLAYLFWPKRRCPGAKYPKSLLSLPLVGSLPFLPRHGHMHNNFFKLQKKYGPIYSVRMGTKTTVIVGHHQLAKEVLIKKGKDFSGRPQMATLDIASNNRKGIAFADSGAHWQLHRRLAMATFALFKDGDQKLEKIICQEISTLCDMLATHNGQSIDISFPVFVAVTNVISLICFNTSYKNGDPELNIIQNYNEGIIDNLSKDSLVDLVPWLKIFPNKTLEKLKSHVKIRNDLLNKILENYKEKFRSDSITNMLDTLMQAKMNSDNGNAGPDQDSELLSDNHILTTIGDIFGAGVETTTSVVKWTLAFLLHNPQVKKKLYEEIDQNVGFSRTPTISDRNRLLLLEATIREVLRLRPVAPMLIPHKANVDSSIGEFAVDKGTQVIINLWALHHNEKEWHQPDQFMPERFLNPAGTQLISPSVSYLPFGAGPRSCIGEILARQELFLIMAWLLQRFDLEVPDDGQLPSLEGIPKVVFLIDSFKVKIKVRQAWREAQAEGST</sequence>
<proteinExistence type="evidence at transcript level"/>
<gene>
    <name type="primary">CYP17A1</name>
    <name type="synonym">CYP17</name>
</gene>